<reference key="1">
    <citation type="journal article" date="2002" name="Proc. Natl. Acad. Sci. U.S.A.">
        <title>The Brucella suis genome reveals fundamental similarities between animal and plant pathogens and symbionts.</title>
        <authorList>
            <person name="Paulsen I.T."/>
            <person name="Seshadri R."/>
            <person name="Nelson K.E."/>
            <person name="Eisen J.A."/>
            <person name="Heidelberg J.F."/>
            <person name="Read T.D."/>
            <person name="Dodson R.J."/>
            <person name="Umayam L.A."/>
            <person name="Brinkac L.M."/>
            <person name="Beanan M.J."/>
            <person name="Daugherty S.C."/>
            <person name="DeBoy R.T."/>
            <person name="Durkin A.S."/>
            <person name="Kolonay J.F."/>
            <person name="Madupu R."/>
            <person name="Nelson W.C."/>
            <person name="Ayodeji B."/>
            <person name="Kraul M."/>
            <person name="Shetty J."/>
            <person name="Malek J.A."/>
            <person name="Van Aken S.E."/>
            <person name="Riedmuller S."/>
            <person name="Tettelin H."/>
            <person name="Gill S.R."/>
            <person name="White O."/>
            <person name="Salzberg S.L."/>
            <person name="Hoover D.L."/>
            <person name="Lindler L.E."/>
            <person name="Halling S.M."/>
            <person name="Boyle S.M."/>
            <person name="Fraser C.M."/>
        </authorList>
    </citation>
    <scope>NUCLEOTIDE SEQUENCE [LARGE SCALE GENOMIC DNA]</scope>
    <source>
        <strain>1330</strain>
    </source>
</reference>
<reference key="2">
    <citation type="journal article" date="2011" name="J. Bacteriol.">
        <title>Revised genome sequence of Brucella suis 1330.</title>
        <authorList>
            <person name="Tae H."/>
            <person name="Shallom S."/>
            <person name="Settlage R."/>
            <person name="Preston D."/>
            <person name="Adams L.G."/>
            <person name="Garner H.R."/>
        </authorList>
    </citation>
    <scope>NUCLEOTIDE SEQUENCE [LARGE SCALE GENOMIC DNA]</scope>
    <source>
        <strain>1330</strain>
    </source>
</reference>
<sequence length="396" mass="44930">MAETQVRNFNINFGPQHPAAHGVLRLVLELDGEVVERVDPHIGLLHRGTEKLMEAKTYLQAVPYLDRLDYVAPMNQEHAYALAVERLLDIEVPKRGQLIRVLYSEIGRILNHLLNVTTQAMDVGALTPPLWGFEEREKLMVFYERACGARMHAAYFRPGGVHQDLPDQLIEDIGKWIDPFFTTLKNLDDLITPNRIFKQRNVDIGVVKLEDAWAWGFSGVMVRGSGAAWDLRKSQPYECYSEMEFDIPVGKNGDCYDRYLIRMEEMRQSARIMRQCVDLLLGKERVGPVSNTDHKIVPPKRGEMKCSMEALIHHFKLYTEGYHVPAGEVYAAVEAPKGEFGVYLVSDGSNKPYRCKLRAPGFAHLQAMDFLCRGHMLADVSAILGSLDIVFGEVDR</sequence>
<comment type="function">
    <text evidence="1">NDH-1 shuttles electrons from NADH, via FMN and iron-sulfur (Fe-S) centers, to quinones in the respiratory chain. The immediate electron acceptor for the enzyme in this species is believed to be ubiquinone. Couples the redox reaction to proton translocation (for every two electrons transferred, four hydrogen ions are translocated across the cytoplasmic membrane), and thus conserves the redox energy in a proton gradient.</text>
</comment>
<comment type="catalytic activity">
    <reaction evidence="1">
        <text>a quinone + NADH + 5 H(+)(in) = a quinol + NAD(+) + 4 H(+)(out)</text>
        <dbReference type="Rhea" id="RHEA:57888"/>
        <dbReference type="ChEBI" id="CHEBI:15378"/>
        <dbReference type="ChEBI" id="CHEBI:24646"/>
        <dbReference type="ChEBI" id="CHEBI:57540"/>
        <dbReference type="ChEBI" id="CHEBI:57945"/>
        <dbReference type="ChEBI" id="CHEBI:132124"/>
    </reaction>
</comment>
<comment type="subunit">
    <text evidence="1">NDH-1 is composed of 14 different subunits. Subunits NuoB, C, D, E, F, and G constitute the peripheral sector of the complex.</text>
</comment>
<comment type="subcellular location">
    <subcellularLocation>
        <location evidence="1">Cell inner membrane</location>
        <topology evidence="1">Peripheral membrane protein</topology>
        <orientation evidence="1">Cytoplasmic side</orientation>
    </subcellularLocation>
</comment>
<comment type="similarity">
    <text evidence="1">Belongs to the complex I 49 kDa subunit family.</text>
</comment>
<accession>Q8G1B4</accession>
<accession>G0K8V3</accession>
<name>NUOD_BRUSU</name>
<keyword id="KW-0997">Cell inner membrane</keyword>
<keyword id="KW-1003">Cell membrane</keyword>
<keyword id="KW-0472">Membrane</keyword>
<keyword id="KW-0520">NAD</keyword>
<keyword id="KW-0874">Quinone</keyword>
<keyword id="KW-1278">Translocase</keyword>
<keyword id="KW-0813">Transport</keyword>
<keyword id="KW-0830">Ubiquinone</keyword>
<protein>
    <recommendedName>
        <fullName evidence="1">NADH-quinone oxidoreductase subunit D</fullName>
        <ecNumber evidence="1">7.1.1.-</ecNumber>
    </recommendedName>
    <alternativeName>
        <fullName evidence="1">NADH dehydrogenase I subunit D</fullName>
    </alternativeName>
    <alternativeName>
        <fullName evidence="1">NDH-1 subunit D</fullName>
    </alternativeName>
</protein>
<dbReference type="EC" id="7.1.1.-" evidence="1"/>
<dbReference type="EMBL" id="AE014291">
    <property type="protein sequence ID" value="AAN29734.1"/>
    <property type="molecule type" value="Genomic_DNA"/>
</dbReference>
<dbReference type="EMBL" id="CP002997">
    <property type="protein sequence ID" value="AEM18151.1"/>
    <property type="molecule type" value="Genomic_DNA"/>
</dbReference>
<dbReference type="RefSeq" id="WP_006190086.1">
    <property type="nucleotide sequence ID" value="NZ_KN046804.1"/>
</dbReference>
<dbReference type="SMR" id="Q8G1B4"/>
<dbReference type="GeneID" id="45051875"/>
<dbReference type="KEGG" id="bms:BR0805"/>
<dbReference type="KEGG" id="bsi:BS1330_I0801"/>
<dbReference type="PATRIC" id="fig|204722.21.peg.1628"/>
<dbReference type="HOGENOM" id="CLU_015134_1_1_5"/>
<dbReference type="PhylomeDB" id="Q8G1B4"/>
<dbReference type="Proteomes" id="UP000007104">
    <property type="component" value="Chromosome I"/>
</dbReference>
<dbReference type="GO" id="GO:0005886">
    <property type="term" value="C:plasma membrane"/>
    <property type="evidence" value="ECO:0007669"/>
    <property type="project" value="UniProtKB-SubCell"/>
</dbReference>
<dbReference type="GO" id="GO:0051287">
    <property type="term" value="F:NAD binding"/>
    <property type="evidence" value="ECO:0007669"/>
    <property type="project" value="InterPro"/>
</dbReference>
<dbReference type="GO" id="GO:0050136">
    <property type="term" value="F:NADH:ubiquinone reductase (non-electrogenic) activity"/>
    <property type="evidence" value="ECO:0007669"/>
    <property type="project" value="UniProtKB-UniRule"/>
</dbReference>
<dbReference type="GO" id="GO:0048038">
    <property type="term" value="F:quinone binding"/>
    <property type="evidence" value="ECO:0007669"/>
    <property type="project" value="UniProtKB-KW"/>
</dbReference>
<dbReference type="FunFam" id="1.10.645.10:FF:000005">
    <property type="entry name" value="NADH-quinone oxidoreductase subunit D"/>
    <property type="match status" value="1"/>
</dbReference>
<dbReference type="Gene3D" id="1.10.645.10">
    <property type="entry name" value="Cytochrome-c3 Hydrogenase, chain B"/>
    <property type="match status" value="1"/>
</dbReference>
<dbReference type="HAMAP" id="MF_01358">
    <property type="entry name" value="NDH1_NuoD"/>
    <property type="match status" value="1"/>
</dbReference>
<dbReference type="InterPro" id="IPR001135">
    <property type="entry name" value="NADH_Q_OxRdtase_suD"/>
</dbReference>
<dbReference type="InterPro" id="IPR014029">
    <property type="entry name" value="NADH_UbQ_OxRdtase_49kDa_CS"/>
</dbReference>
<dbReference type="InterPro" id="IPR022885">
    <property type="entry name" value="NDH1_su_D/H"/>
</dbReference>
<dbReference type="InterPro" id="IPR029014">
    <property type="entry name" value="NiFe-Hase_large"/>
</dbReference>
<dbReference type="NCBIfam" id="TIGR01962">
    <property type="entry name" value="NuoD"/>
    <property type="match status" value="1"/>
</dbReference>
<dbReference type="NCBIfam" id="NF004739">
    <property type="entry name" value="PRK06075.1"/>
    <property type="match status" value="1"/>
</dbReference>
<dbReference type="PANTHER" id="PTHR11993:SF10">
    <property type="entry name" value="NADH DEHYDROGENASE [UBIQUINONE] IRON-SULFUR PROTEIN 2, MITOCHONDRIAL"/>
    <property type="match status" value="1"/>
</dbReference>
<dbReference type="PANTHER" id="PTHR11993">
    <property type="entry name" value="NADH-UBIQUINONE OXIDOREDUCTASE 49 KDA SUBUNIT"/>
    <property type="match status" value="1"/>
</dbReference>
<dbReference type="Pfam" id="PF00346">
    <property type="entry name" value="Complex1_49kDa"/>
    <property type="match status" value="1"/>
</dbReference>
<dbReference type="SUPFAM" id="SSF56762">
    <property type="entry name" value="HydB/Nqo4-like"/>
    <property type="match status" value="1"/>
</dbReference>
<dbReference type="PROSITE" id="PS00535">
    <property type="entry name" value="COMPLEX1_49K"/>
    <property type="match status" value="1"/>
</dbReference>
<feature type="chain" id="PRO_0000357788" description="NADH-quinone oxidoreductase subunit D">
    <location>
        <begin position="1"/>
        <end position="396"/>
    </location>
</feature>
<proteinExistence type="inferred from homology"/>
<evidence type="ECO:0000255" key="1">
    <source>
        <dbReference type="HAMAP-Rule" id="MF_01358"/>
    </source>
</evidence>
<gene>
    <name evidence="1" type="primary">nuoD</name>
    <name type="ordered locus">BR0805</name>
    <name type="ordered locus">BS1330_I0801</name>
</gene>
<organism>
    <name type="scientific">Brucella suis biovar 1 (strain 1330)</name>
    <dbReference type="NCBI Taxonomy" id="204722"/>
    <lineage>
        <taxon>Bacteria</taxon>
        <taxon>Pseudomonadati</taxon>
        <taxon>Pseudomonadota</taxon>
        <taxon>Alphaproteobacteria</taxon>
        <taxon>Hyphomicrobiales</taxon>
        <taxon>Brucellaceae</taxon>
        <taxon>Brucella/Ochrobactrum group</taxon>
        <taxon>Brucella</taxon>
    </lineage>
</organism>